<organism>
    <name type="scientific">Yersinia pseudotuberculosis serotype IB (strain PB1/+)</name>
    <dbReference type="NCBI Taxonomy" id="502801"/>
    <lineage>
        <taxon>Bacteria</taxon>
        <taxon>Pseudomonadati</taxon>
        <taxon>Pseudomonadota</taxon>
        <taxon>Gammaproteobacteria</taxon>
        <taxon>Enterobacterales</taxon>
        <taxon>Yersiniaceae</taxon>
        <taxon>Yersinia</taxon>
    </lineage>
</organism>
<sequence>MRVLGIETSCDETGIAVYDDKAGLLANQLYSQVKLHADYGGVVPELASRDHVRKTVPLIQAALKEANLSAKDIDAVAYTAGPGLVGALLVGATIGRALAFAWGVPAVPVHHMEGHLLAPMLEENAPEFPFVALLVSGGHTQLISVTGIGEYLLLGESVDDAAGEAFDKTAKLLGLDYPGGPMLSRMAQQGTVGRFTFPRPMTDRPGLDFSFSGLKTFAANTIRANGDDDQTRADIARAFEDAVVDTLAIKSKRALDQTGFKRLVIAGGVSANQTLRLKLADMMQKRGGEVFYARPEFCTDNGAMIAYAGMVRLRSNLNSELSVSVRPRWPLSELPKV</sequence>
<comment type="function">
    <text evidence="1">Required for the formation of a threonylcarbamoyl group on adenosine at position 37 (t(6)A37) in tRNAs that read codons beginning with adenine. Is involved in the transfer of the threonylcarbamoyl moiety of threonylcarbamoyl-AMP (TC-AMP) to the N6 group of A37, together with TsaE and TsaB. TsaD likely plays a direct catalytic role in this reaction.</text>
</comment>
<comment type="catalytic activity">
    <reaction evidence="1">
        <text>L-threonylcarbamoyladenylate + adenosine(37) in tRNA = N(6)-L-threonylcarbamoyladenosine(37) in tRNA + AMP + H(+)</text>
        <dbReference type="Rhea" id="RHEA:37059"/>
        <dbReference type="Rhea" id="RHEA-COMP:10162"/>
        <dbReference type="Rhea" id="RHEA-COMP:10163"/>
        <dbReference type="ChEBI" id="CHEBI:15378"/>
        <dbReference type="ChEBI" id="CHEBI:73682"/>
        <dbReference type="ChEBI" id="CHEBI:74411"/>
        <dbReference type="ChEBI" id="CHEBI:74418"/>
        <dbReference type="ChEBI" id="CHEBI:456215"/>
        <dbReference type="EC" id="2.3.1.234"/>
    </reaction>
</comment>
<comment type="cofactor">
    <cofactor evidence="1">
        <name>Fe(2+)</name>
        <dbReference type="ChEBI" id="CHEBI:29033"/>
    </cofactor>
    <text evidence="1">Binds 1 Fe(2+) ion per subunit.</text>
</comment>
<comment type="subcellular location">
    <subcellularLocation>
        <location evidence="1">Cytoplasm</location>
    </subcellularLocation>
</comment>
<comment type="similarity">
    <text evidence="1">Belongs to the KAE1 / TsaD family.</text>
</comment>
<proteinExistence type="inferred from homology"/>
<protein>
    <recommendedName>
        <fullName evidence="1">tRNA N6-adenosine threonylcarbamoyltransferase</fullName>
        <ecNumber evidence="1">2.3.1.234</ecNumber>
    </recommendedName>
    <alternativeName>
        <fullName evidence="1">N6-L-threonylcarbamoyladenine synthase</fullName>
        <shortName evidence="1">t(6)A synthase</shortName>
    </alternativeName>
    <alternativeName>
        <fullName evidence="1">t(6)A37 threonylcarbamoyladenosine biosynthesis protein TsaD</fullName>
    </alternativeName>
    <alternativeName>
        <fullName evidence="1">tRNA threonylcarbamoyladenosine biosynthesis protein TsaD</fullName>
    </alternativeName>
</protein>
<dbReference type="EC" id="2.3.1.234" evidence="1"/>
<dbReference type="EMBL" id="CP001048">
    <property type="protein sequence ID" value="ACC90512.1"/>
    <property type="molecule type" value="Genomic_DNA"/>
</dbReference>
<dbReference type="RefSeq" id="WP_002212201.1">
    <property type="nucleotide sequence ID" value="NZ_CP009780.1"/>
</dbReference>
<dbReference type="SMR" id="B2K2I3"/>
<dbReference type="GeneID" id="57973978"/>
<dbReference type="KEGG" id="ypb:YPTS_3559"/>
<dbReference type="PATRIC" id="fig|502801.10.peg.3006"/>
<dbReference type="GO" id="GO:0005737">
    <property type="term" value="C:cytoplasm"/>
    <property type="evidence" value="ECO:0007669"/>
    <property type="project" value="UniProtKB-SubCell"/>
</dbReference>
<dbReference type="GO" id="GO:0005506">
    <property type="term" value="F:iron ion binding"/>
    <property type="evidence" value="ECO:0007669"/>
    <property type="project" value="UniProtKB-UniRule"/>
</dbReference>
<dbReference type="GO" id="GO:0061711">
    <property type="term" value="F:N(6)-L-threonylcarbamoyladenine synthase activity"/>
    <property type="evidence" value="ECO:0007669"/>
    <property type="project" value="UniProtKB-EC"/>
</dbReference>
<dbReference type="GO" id="GO:0002949">
    <property type="term" value="P:tRNA threonylcarbamoyladenosine modification"/>
    <property type="evidence" value="ECO:0007669"/>
    <property type="project" value="UniProtKB-UniRule"/>
</dbReference>
<dbReference type="CDD" id="cd24133">
    <property type="entry name" value="ASKHA_NBD_TsaD_bac"/>
    <property type="match status" value="1"/>
</dbReference>
<dbReference type="FunFam" id="3.30.420.40:FF:000031">
    <property type="entry name" value="tRNA N6-adenosine threonylcarbamoyltransferase"/>
    <property type="match status" value="1"/>
</dbReference>
<dbReference type="Gene3D" id="3.30.420.40">
    <property type="match status" value="2"/>
</dbReference>
<dbReference type="HAMAP" id="MF_01445">
    <property type="entry name" value="TsaD"/>
    <property type="match status" value="1"/>
</dbReference>
<dbReference type="InterPro" id="IPR043129">
    <property type="entry name" value="ATPase_NBD"/>
</dbReference>
<dbReference type="InterPro" id="IPR000905">
    <property type="entry name" value="Gcp-like_dom"/>
</dbReference>
<dbReference type="InterPro" id="IPR017861">
    <property type="entry name" value="KAE1/TsaD"/>
</dbReference>
<dbReference type="InterPro" id="IPR017860">
    <property type="entry name" value="Peptidase_M22_CS"/>
</dbReference>
<dbReference type="InterPro" id="IPR022450">
    <property type="entry name" value="TsaD"/>
</dbReference>
<dbReference type="NCBIfam" id="TIGR00329">
    <property type="entry name" value="gcp_kae1"/>
    <property type="match status" value="1"/>
</dbReference>
<dbReference type="NCBIfam" id="TIGR03723">
    <property type="entry name" value="T6A_TsaD_YgjD"/>
    <property type="match status" value="1"/>
</dbReference>
<dbReference type="PANTHER" id="PTHR11735">
    <property type="entry name" value="TRNA N6-ADENOSINE THREONYLCARBAMOYLTRANSFERASE"/>
    <property type="match status" value="1"/>
</dbReference>
<dbReference type="PANTHER" id="PTHR11735:SF6">
    <property type="entry name" value="TRNA N6-ADENOSINE THREONYLCARBAMOYLTRANSFERASE, MITOCHONDRIAL"/>
    <property type="match status" value="1"/>
</dbReference>
<dbReference type="Pfam" id="PF00814">
    <property type="entry name" value="TsaD"/>
    <property type="match status" value="1"/>
</dbReference>
<dbReference type="PRINTS" id="PR00789">
    <property type="entry name" value="OSIALOPTASE"/>
</dbReference>
<dbReference type="SUPFAM" id="SSF53067">
    <property type="entry name" value="Actin-like ATPase domain"/>
    <property type="match status" value="1"/>
</dbReference>
<dbReference type="PROSITE" id="PS01016">
    <property type="entry name" value="GLYCOPROTEASE"/>
    <property type="match status" value="1"/>
</dbReference>
<accession>B2K2I3</accession>
<reference key="1">
    <citation type="submission" date="2008-04" db="EMBL/GenBank/DDBJ databases">
        <title>Complete sequence of Yersinia pseudotuberculosis PB1/+.</title>
        <authorList>
            <person name="Copeland A."/>
            <person name="Lucas S."/>
            <person name="Lapidus A."/>
            <person name="Glavina del Rio T."/>
            <person name="Dalin E."/>
            <person name="Tice H."/>
            <person name="Bruce D."/>
            <person name="Goodwin L."/>
            <person name="Pitluck S."/>
            <person name="Munk A.C."/>
            <person name="Brettin T."/>
            <person name="Detter J.C."/>
            <person name="Han C."/>
            <person name="Tapia R."/>
            <person name="Schmutz J."/>
            <person name="Larimer F."/>
            <person name="Land M."/>
            <person name="Hauser L."/>
            <person name="Challacombe J.F."/>
            <person name="Green L."/>
            <person name="Lindler L.E."/>
            <person name="Nikolich M.P."/>
            <person name="Richardson P."/>
        </authorList>
    </citation>
    <scope>NUCLEOTIDE SEQUENCE [LARGE SCALE GENOMIC DNA]</scope>
    <source>
        <strain>PB1/+</strain>
    </source>
</reference>
<evidence type="ECO:0000255" key="1">
    <source>
        <dbReference type="HAMAP-Rule" id="MF_01445"/>
    </source>
</evidence>
<name>TSAD_YERPB</name>
<keyword id="KW-0012">Acyltransferase</keyword>
<keyword id="KW-0963">Cytoplasm</keyword>
<keyword id="KW-0408">Iron</keyword>
<keyword id="KW-0479">Metal-binding</keyword>
<keyword id="KW-0808">Transferase</keyword>
<keyword id="KW-0819">tRNA processing</keyword>
<gene>
    <name evidence="1" type="primary">tsaD</name>
    <name type="synonym">gcp</name>
    <name type="ordered locus">YPTS_3559</name>
</gene>
<feature type="chain" id="PRO_1000146046" description="tRNA N6-adenosine threonylcarbamoyltransferase">
    <location>
        <begin position="1"/>
        <end position="337"/>
    </location>
</feature>
<feature type="binding site" evidence="1">
    <location>
        <position position="111"/>
    </location>
    <ligand>
        <name>Fe cation</name>
        <dbReference type="ChEBI" id="CHEBI:24875"/>
    </ligand>
</feature>
<feature type="binding site" evidence="1">
    <location>
        <position position="115"/>
    </location>
    <ligand>
        <name>Fe cation</name>
        <dbReference type="ChEBI" id="CHEBI:24875"/>
    </ligand>
</feature>
<feature type="binding site" evidence="1">
    <location>
        <begin position="134"/>
        <end position="138"/>
    </location>
    <ligand>
        <name>substrate</name>
    </ligand>
</feature>
<feature type="binding site" evidence="1">
    <location>
        <position position="167"/>
    </location>
    <ligand>
        <name>substrate</name>
    </ligand>
</feature>
<feature type="binding site" evidence="1">
    <location>
        <position position="180"/>
    </location>
    <ligand>
        <name>substrate</name>
    </ligand>
</feature>
<feature type="binding site" evidence="1">
    <location>
        <position position="272"/>
    </location>
    <ligand>
        <name>substrate</name>
    </ligand>
</feature>
<feature type="binding site" evidence="1">
    <location>
        <position position="300"/>
    </location>
    <ligand>
        <name>Fe cation</name>
        <dbReference type="ChEBI" id="CHEBI:24875"/>
    </ligand>
</feature>